<gene>
    <name type="ordered locus">At3g19553</name>
    <name type="ORF">T31J18.6</name>
</gene>
<feature type="chain" id="PRO_0000418911" description="Probable polyamine transporter At3g19553">
    <location>
        <begin position="1"/>
        <end position="479"/>
    </location>
</feature>
<feature type="transmembrane region" description="Helical" evidence="2">
    <location>
        <begin position="22"/>
        <end position="42"/>
    </location>
</feature>
<feature type="transmembrane region" description="Helical" evidence="2">
    <location>
        <begin position="53"/>
        <end position="73"/>
    </location>
</feature>
<feature type="transmembrane region" description="Helical" evidence="2">
    <location>
        <begin position="86"/>
        <end position="106"/>
    </location>
</feature>
<feature type="transmembrane region" description="Helical" evidence="2">
    <location>
        <begin position="130"/>
        <end position="150"/>
    </location>
</feature>
<feature type="transmembrane region" description="Helical" evidence="2">
    <location>
        <begin position="160"/>
        <end position="180"/>
    </location>
</feature>
<feature type="transmembrane region" description="Helical" evidence="2">
    <location>
        <begin position="236"/>
        <end position="256"/>
    </location>
</feature>
<feature type="transmembrane region" description="Helical" evidence="2">
    <location>
        <begin position="275"/>
        <end position="295"/>
    </location>
</feature>
<feature type="transmembrane region" description="Helical" evidence="2">
    <location>
        <begin position="304"/>
        <end position="324"/>
    </location>
</feature>
<feature type="transmembrane region" description="Helical" evidence="2">
    <location>
        <begin position="332"/>
        <end position="352"/>
    </location>
</feature>
<feature type="transmembrane region" description="Helical" evidence="2">
    <location>
        <begin position="355"/>
        <end position="375"/>
    </location>
</feature>
<feature type="transmembrane region" description="Helical" evidence="2">
    <location>
        <begin position="395"/>
        <end position="415"/>
    </location>
</feature>
<feature type="transmembrane region" description="Helical" evidence="2">
    <location>
        <begin position="420"/>
        <end position="440"/>
    </location>
</feature>
<feature type="region of interest" description="Disordered" evidence="3">
    <location>
        <begin position="454"/>
        <end position="479"/>
    </location>
</feature>
<proteinExistence type="inferred from homology"/>
<evidence type="ECO:0000250" key="1"/>
<evidence type="ECO:0000255" key="2"/>
<evidence type="ECO:0000256" key="3">
    <source>
        <dbReference type="SAM" id="MobiDB-lite"/>
    </source>
</evidence>
<evidence type="ECO:0000305" key="4"/>
<reference key="1">
    <citation type="journal article" date="2000" name="DNA Res.">
        <title>Structural analysis of Arabidopsis thaliana chromosome 3. II. Sequence features of the 4,251,695 bp regions covered by 90 P1, TAC and BAC clones.</title>
        <authorList>
            <person name="Kaneko T."/>
            <person name="Katoh T."/>
            <person name="Sato S."/>
            <person name="Nakamura Y."/>
            <person name="Asamizu E."/>
            <person name="Tabata S."/>
        </authorList>
    </citation>
    <scope>NUCLEOTIDE SEQUENCE [LARGE SCALE GENOMIC DNA]</scope>
    <source>
        <strain>cv. Columbia</strain>
    </source>
</reference>
<reference key="2">
    <citation type="journal article" date="2017" name="Plant J.">
        <title>Araport11: a complete reannotation of the Arabidopsis thaliana reference genome.</title>
        <authorList>
            <person name="Cheng C.Y."/>
            <person name="Krishnakumar V."/>
            <person name="Chan A.P."/>
            <person name="Thibaud-Nissen F."/>
            <person name="Schobel S."/>
            <person name="Town C.D."/>
        </authorList>
    </citation>
    <scope>GENOME REANNOTATION</scope>
    <source>
        <strain>cv. Columbia</strain>
    </source>
</reference>
<organism>
    <name type="scientific">Arabidopsis thaliana</name>
    <name type="common">Mouse-ear cress</name>
    <dbReference type="NCBI Taxonomy" id="3702"/>
    <lineage>
        <taxon>Eukaryota</taxon>
        <taxon>Viridiplantae</taxon>
        <taxon>Streptophyta</taxon>
        <taxon>Embryophyta</taxon>
        <taxon>Tracheophyta</taxon>
        <taxon>Spermatophyta</taxon>
        <taxon>Magnoliopsida</taxon>
        <taxon>eudicotyledons</taxon>
        <taxon>Gunneridae</taxon>
        <taxon>Pentapetalae</taxon>
        <taxon>rosids</taxon>
        <taxon>malvids</taxon>
        <taxon>Brassicales</taxon>
        <taxon>Brassicaceae</taxon>
        <taxon>Camelineae</taxon>
        <taxon>Arabidopsis</taxon>
    </lineage>
</organism>
<sequence>MGEEETIVNDENSSKPKPSPKLTLLPLVFLIFYEVSGGPFGVEDSVKSGGGPLLALLGFLIFPLIWSIPEALVTAELATSFPENGGYVVWISSAFGPFWGFQEGFWKWFSGVMDNALYPVLFLDYLKHSFPVLDHVAARVPALLVITFSLTYLNYRGLHIVGFSAVVLAVFSLCPFVVMALLAVPNIRPKRWLFVDTQKINWRGYFNTMFWNLNYWDKASTLAGEVDRPGKTFPKALFGAVLLVMGSYLIPLMAGTGALSSSTSGEWSDGYFAEVGMLIGGVWLKGWIQAAAAMSNLGLFEAEMSSDAFQLLGMSEIGMLPAFFAQRSKYGTPTISILCSATGVIFLSWMSFQEIIEFLNFLYALGMLLEFAAFVKLRIKKPDLHRPYRVPLNTFGVSMLCLPPSLLVILVMVLAAPKTFLISGVIIVLGFCLYPFLTLVKEKQWARFIPEETRPVSGVSSESQLDEEHGDESAASLLP</sequence>
<comment type="function">
    <text evidence="1">Probable cell membrane polyamine/proton symporter involved in the polyamine uptake in cells.</text>
</comment>
<comment type="subcellular location">
    <subcellularLocation>
        <location evidence="1">Cell membrane</location>
        <topology evidence="4">Multi-pass membrane protein</topology>
    </subcellularLocation>
</comment>
<comment type="similarity">
    <text evidence="4">Belongs to the amino acid-polyamine-organocation (APC) superfamily. Polyamine:cation symporter (PHS) (TC 2.A.3.12) family.</text>
</comment>
<dbReference type="EMBL" id="AP002065">
    <property type="protein sequence ID" value="BAB01977.1"/>
    <property type="molecule type" value="Genomic_DNA"/>
</dbReference>
<dbReference type="EMBL" id="CP002686">
    <property type="protein sequence ID" value="AEE76257.1"/>
    <property type="molecule type" value="Genomic_DNA"/>
</dbReference>
<dbReference type="SMR" id="Q9LH39"/>
<dbReference type="BioGRID" id="6825">
    <property type="interactions" value="2"/>
</dbReference>
<dbReference type="FunCoup" id="Q9LH39">
    <property type="interactions" value="190"/>
</dbReference>
<dbReference type="STRING" id="3702.Q9LH39"/>
<dbReference type="PaxDb" id="3702-AT3G19553.1"/>
<dbReference type="ProteomicsDB" id="236751"/>
<dbReference type="EnsemblPlants" id="AT3G19553.1">
    <property type="protein sequence ID" value="AT3G19553.1"/>
    <property type="gene ID" value="AT3G19553"/>
</dbReference>
<dbReference type="Gramene" id="AT3G19553.1">
    <property type="protein sequence ID" value="AT3G19553.1"/>
    <property type="gene ID" value="AT3G19553"/>
</dbReference>
<dbReference type="KEGG" id="ath:AT3G19553"/>
<dbReference type="Araport" id="AT3G19553"/>
<dbReference type="TAIR" id="AT3G19553">
    <property type="gene designation" value="PUT5"/>
</dbReference>
<dbReference type="eggNOG" id="KOG1287">
    <property type="taxonomic scope" value="Eukaryota"/>
</dbReference>
<dbReference type="HOGENOM" id="CLU_007946_17_3_1"/>
<dbReference type="InParanoid" id="Q9LH39"/>
<dbReference type="OMA" id="WGFQEAW"/>
<dbReference type="PhylomeDB" id="Q9LH39"/>
<dbReference type="PRO" id="PR:Q9LH39"/>
<dbReference type="Proteomes" id="UP000006548">
    <property type="component" value="Chromosome 3"/>
</dbReference>
<dbReference type="ExpressionAtlas" id="Q9LH39">
    <property type="expression patterns" value="baseline and differential"/>
</dbReference>
<dbReference type="GO" id="GO:0005783">
    <property type="term" value="C:endoplasmic reticulum"/>
    <property type="evidence" value="ECO:0000314"/>
    <property type="project" value="TAIR"/>
</dbReference>
<dbReference type="GO" id="GO:0005886">
    <property type="term" value="C:plasma membrane"/>
    <property type="evidence" value="ECO:0007669"/>
    <property type="project" value="UniProtKB-SubCell"/>
</dbReference>
<dbReference type="GO" id="GO:0015203">
    <property type="term" value="F:polyamine transmembrane transporter activity"/>
    <property type="evidence" value="ECO:0000314"/>
    <property type="project" value="TAIR"/>
</dbReference>
<dbReference type="GO" id="GO:0015293">
    <property type="term" value="F:symporter activity"/>
    <property type="evidence" value="ECO:0007669"/>
    <property type="project" value="UniProtKB-KW"/>
</dbReference>
<dbReference type="GO" id="GO:0015846">
    <property type="term" value="P:polyamine transport"/>
    <property type="evidence" value="ECO:0000314"/>
    <property type="project" value="TAIR"/>
</dbReference>
<dbReference type="FunFam" id="1.20.1740.10:FF:000041">
    <property type="entry name" value="Amino acid permease, putative"/>
    <property type="match status" value="1"/>
</dbReference>
<dbReference type="Gene3D" id="1.20.1740.10">
    <property type="entry name" value="Amino acid/polyamine transporter I"/>
    <property type="match status" value="1"/>
</dbReference>
<dbReference type="InterPro" id="IPR002293">
    <property type="entry name" value="AA/rel_permease1"/>
</dbReference>
<dbReference type="InterPro" id="IPR044566">
    <property type="entry name" value="RMV1-like"/>
</dbReference>
<dbReference type="PANTHER" id="PTHR45826:SF17">
    <property type="entry name" value="OS12G0580400 PROTEIN"/>
    <property type="match status" value="1"/>
</dbReference>
<dbReference type="PANTHER" id="PTHR45826">
    <property type="entry name" value="POLYAMINE TRANSPORTER PUT1"/>
    <property type="match status" value="1"/>
</dbReference>
<dbReference type="Pfam" id="PF13520">
    <property type="entry name" value="AA_permease_2"/>
    <property type="match status" value="1"/>
</dbReference>
<dbReference type="PIRSF" id="PIRSF006060">
    <property type="entry name" value="AA_transporter"/>
    <property type="match status" value="1"/>
</dbReference>
<protein>
    <recommendedName>
        <fullName>Probable polyamine transporter At3g19553</fullName>
    </recommendedName>
</protein>
<name>PHSD_ARATH</name>
<accession>Q9LH39</accession>
<keyword id="KW-1003">Cell membrane</keyword>
<keyword id="KW-0472">Membrane</keyword>
<keyword id="KW-1185">Reference proteome</keyword>
<keyword id="KW-0769">Symport</keyword>
<keyword id="KW-0812">Transmembrane</keyword>
<keyword id="KW-1133">Transmembrane helix</keyword>
<keyword id="KW-0813">Transport</keyword>